<proteinExistence type="inferred from homology"/>
<keyword id="KW-0997">Cell inner membrane</keyword>
<keyword id="KW-1003">Cell membrane</keyword>
<keyword id="KW-0472">Membrane</keyword>
<keyword id="KW-0488">Methylation</keyword>
<keyword id="KW-0653">Protein transport</keyword>
<keyword id="KW-1185">Reference proteome</keyword>
<keyword id="KW-0812">Transmembrane</keyword>
<keyword id="KW-1133">Transmembrane helix</keyword>
<keyword id="KW-0813">Transport</keyword>
<sequence length="221" mass="25260">MWRTNQVSSRQNMAGFTLIEVLVAIAIFASLSVGAYQVLNQVQRSNEISAERTARLAELQRAMVIMDADFRQMALRQFRTDGEAPSEQILQWKESLLDSDQHGLLFVRLGWHNPQQQFPRGEVAKVGYRLFENRLERVWWRYPDTPAGQQGLISPLLTGVEDWAVQFYLQGEWSKEWVPTNALPEAVKVTLRLKDYGEIERIYLTGGGSLNMTQESVENAG</sequence>
<reference key="1">
    <citation type="thesis" date="1994" institute="Michigan State University" country="United States">
        <title>Organization of the general secretion pathway genes in Vibrio cholerae.</title>
        <authorList>
            <person name="Overbye L.J."/>
        </authorList>
    </citation>
    <scope>NUCLEOTIDE SEQUENCE [GENOMIC DNA]</scope>
    <source>
        <strain>El Tor TRH7000</strain>
    </source>
</reference>
<reference key="2">
    <citation type="journal article" date="2000" name="Nature">
        <title>DNA sequence of both chromosomes of the cholera pathogen Vibrio cholerae.</title>
        <authorList>
            <person name="Heidelberg J.F."/>
            <person name="Eisen J.A."/>
            <person name="Nelson W.C."/>
            <person name="Clayton R.A."/>
            <person name="Gwinn M.L."/>
            <person name="Dodson R.J."/>
            <person name="Haft D.H."/>
            <person name="Hickey E.K."/>
            <person name="Peterson J.D."/>
            <person name="Umayam L.A."/>
            <person name="Gill S.R."/>
            <person name="Nelson K.E."/>
            <person name="Read T.D."/>
            <person name="Tettelin H."/>
            <person name="Richardson D.L."/>
            <person name="Ermolaeva M.D."/>
            <person name="Vamathevan J.J."/>
            <person name="Bass S."/>
            <person name="Qin H."/>
            <person name="Dragoi I."/>
            <person name="Sellers P."/>
            <person name="McDonald L.A."/>
            <person name="Utterback T.R."/>
            <person name="Fleischmann R.D."/>
            <person name="Nierman W.C."/>
            <person name="White O."/>
            <person name="Salzberg S.L."/>
            <person name="Smith H.O."/>
            <person name="Colwell R.R."/>
            <person name="Mekalanos J.J."/>
            <person name="Venter J.C."/>
            <person name="Fraser C.M."/>
        </authorList>
    </citation>
    <scope>NUCLEOTIDE SEQUENCE [LARGE SCALE GENOMIC DNA]</scope>
    <source>
        <strain>ATCC 39315 / El Tor Inaba N16961</strain>
    </source>
</reference>
<feature type="propeptide" id="PRO_0000024258" description="Leader sequence" evidence="3">
    <location>
        <begin position="1"/>
        <end position="15"/>
    </location>
</feature>
<feature type="chain" id="PRO_0000024259" description="Type II secretion system protein J">
    <location>
        <begin position="16"/>
        <end position="221"/>
    </location>
</feature>
<feature type="transmembrane region" description="Helical" evidence="4">
    <location>
        <begin position="16"/>
        <end position="36"/>
    </location>
</feature>
<feature type="modified residue" description="N-methylphenylalanine" evidence="3">
    <location>
        <position position="16"/>
    </location>
</feature>
<feature type="sequence conflict" description="In Ref. 1; AAA58791." evidence="4" ref="1">
    <original>KVT</original>
    <variation>ESD</variation>
    <location>
        <begin position="188"/>
        <end position="190"/>
    </location>
</feature>
<protein>
    <recommendedName>
        <fullName>Type II secretion system protein J</fullName>
        <shortName>T2SS protein J</shortName>
    </recommendedName>
    <alternativeName>
        <fullName>Cholera toxin secretion protein EpsJ</fullName>
    </alternativeName>
    <alternativeName>
        <fullName>General secretion pathway protein J</fullName>
    </alternativeName>
</protein>
<gene>
    <name type="primary">epsJ</name>
    <name type="ordered locus">VC_2727</name>
</gene>
<organism>
    <name type="scientific">Vibrio cholerae serotype O1 (strain ATCC 39315 / El Tor Inaba N16961)</name>
    <dbReference type="NCBI Taxonomy" id="243277"/>
    <lineage>
        <taxon>Bacteria</taxon>
        <taxon>Pseudomonadati</taxon>
        <taxon>Pseudomonadota</taxon>
        <taxon>Gammaproteobacteria</taxon>
        <taxon>Vibrionales</taxon>
        <taxon>Vibrionaceae</taxon>
        <taxon>Vibrio</taxon>
    </lineage>
</organism>
<dbReference type="EMBL" id="L33796">
    <property type="protein sequence ID" value="AAA58791.1"/>
    <property type="molecule type" value="Genomic_DNA"/>
</dbReference>
<dbReference type="EMBL" id="AE003852">
    <property type="protein sequence ID" value="AAF95867.1"/>
    <property type="molecule type" value="Genomic_DNA"/>
</dbReference>
<dbReference type="PIR" id="A82041">
    <property type="entry name" value="A82041"/>
</dbReference>
<dbReference type="RefSeq" id="NP_232354.1">
    <property type="nucleotide sequence ID" value="NC_002505.1"/>
</dbReference>
<dbReference type="SMR" id="P45776"/>
<dbReference type="STRING" id="243277.VC_2727"/>
<dbReference type="DNASU" id="2614890"/>
<dbReference type="EnsemblBacteria" id="AAF95867">
    <property type="protein sequence ID" value="AAF95867"/>
    <property type="gene ID" value="VC_2727"/>
</dbReference>
<dbReference type="KEGG" id="vch:VC_2727"/>
<dbReference type="PATRIC" id="fig|243277.26.peg.2602"/>
<dbReference type="eggNOG" id="COG4795">
    <property type="taxonomic scope" value="Bacteria"/>
</dbReference>
<dbReference type="HOGENOM" id="CLU_093850_0_0_6"/>
<dbReference type="Proteomes" id="UP000000584">
    <property type="component" value="Chromosome 1"/>
</dbReference>
<dbReference type="GO" id="GO:0005886">
    <property type="term" value="C:plasma membrane"/>
    <property type="evidence" value="ECO:0007669"/>
    <property type="project" value="UniProtKB-SubCell"/>
</dbReference>
<dbReference type="GO" id="GO:0015627">
    <property type="term" value="C:type II protein secretion system complex"/>
    <property type="evidence" value="ECO:0007669"/>
    <property type="project" value="InterPro"/>
</dbReference>
<dbReference type="GO" id="GO:0015628">
    <property type="term" value="P:protein secretion by the type II secretion system"/>
    <property type="evidence" value="ECO:0000318"/>
    <property type="project" value="GO_Central"/>
</dbReference>
<dbReference type="FunFam" id="3.10.610.10:FF:000001">
    <property type="entry name" value="General secretion pathway protein J"/>
    <property type="match status" value="1"/>
</dbReference>
<dbReference type="Gene3D" id="3.10.610.10">
    <property type="entry name" value="GSPII I/J protein-like"/>
    <property type="match status" value="1"/>
</dbReference>
<dbReference type="Gene3D" id="2.10.70.20">
    <property type="entry name" value="gspk-gspi-gspj complex like domains"/>
    <property type="match status" value="1"/>
</dbReference>
<dbReference type="InterPro" id="IPR012902">
    <property type="entry name" value="N_methyl_site"/>
</dbReference>
<dbReference type="InterPro" id="IPR045584">
    <property type="entry name" value="Pilin-like"/>
</dbReference>
<dbReference type="InterPro" id="IPR010055">
    <property type="entry name" value="T2SS_protein-GspJ"/>
</dbReference>
<dbReference type="InterPro" id="IPR051621">
    <property type="entry name" value="T2SS_protein_J"/>
</dbReference>
<dbReference type="NCBIfam" id="TIGR01711">
    <property type="entry name" value="gspJ"/>
    <property type="match status" value="1"/>
</dbReference>
<dbReference type="NCBIfam" id="TIGR02532">
    <property type="entry name" value="IV_pilin_GFxxxE"/>
    <property type="match status" value="1"/>
</dbReference>
<dbReference type="PANTHER" id="PTHR39583:SF2">
    <property type="entry name" value="TYPE II SECRETION SYSTEM PROTEIN J"/>
    <property type="match status" value="1"/>
</dbReference>
<dbReference type="PANTHER" id="PTHR39583">
    <property type="entry name" value="TYPE II SECRETION SYSTEM PROTEIN J-RELATED"/>
    <property type="match status" value="1"/>
</dbReference>
<dbReference type="Pfam" id="PF07963">
    <property type="entry name" value="N_methyl"/>
    <property type="match status" value="1"/>
</dbReference>
<dbReference type="Pfam" id="PF11612">
    <property type="entry name" value="T2SSJ"/>
    <property type="match status" value="1"/>
</dbReference>
<dbReference type="SUPFAM" id="SSF54523">
    <property type="entry name" value="Pili subunits"/>
    <property type="match status" value="1"/>
</dbReference>
<dbReference type="PROSITE" id="PS00409">
    <property type="entry name" value="PROKAR_NTER_METHYL"/>
    <property type="match status" value="1"/>
</dbReference>
<comment type="function">
    <text evidence="1">Component of the type II secretion system required for the energy-dependent secretion of extracellular factors such as proteases and toxins from the periplasm. Part of the pseudopilus tip complex that is critical for the recognition and binding of secretion substrates.</text>
</comment>
<comment type="subunit">
    <text evidence="1">Type II secretion is composed of four main components: the outer membrane complex, the inner membrane complex, the cytoplasmic secretion ATPase and the periplasm-spanning pseudopilus. Interacts with core component epsG.</text>
</comment>
<comment type="subcellular location">
    <subcellularLocation>
        <location evidence="1">Cell inner membrane</location>
        <topology evidence="2">Single-pass membrane protein</topology>
    </subcellularLocation>
</comment>
<comment type="PTM">
    <text evidence="1">Cleaved by prepilin peptidase.</text>
</comment>
<comment type="PTM">
    <text evidence="1">Methylated by prepilin peptidase at the amino group of the N-terminal phenylalanine once the leader sequence is cleaved by prepilin peptidase.</text>
</comment>
<comment type="similarity">
    <text evidence="4">Belongs to the GSP J family.</text>
</comment>
<evidence type="ECO:0000250" key="1">
    <source>
        <dbReference type="UniProtKB" id="Q00517"/>
    </source>
</evidence>
<evidence type="ECO:0000255" key="2"/>
<evidence type="ECO:0000255" key="3">
    <source>
        <dbReference type="PROSITE-ProRule" id="PRU01070"/>
    </source>
</evidence>
<evidence type="ECO:0000305" key="4"/>
<name>GSPJ_VIBCH</name>
<accession>P45776</accession>
<accession>Q9KNK5</accession>